<evidence type="ECO:0000250" key="1"/>
<evidence type="ECO:0000255" key="2">
    <source>
        <dbReference type="PROSITE-ProRule" id="PRU10007"/>
    </source>
</evidence>
<evidence type="ECO:0000305" key="3"/>
<organism>
    <name type="scientific">Methanococcus maripaludis (strain C5 / ATCC BAA-1333)</name>
    <dbReference type="NCBI Taxonomy" id="402880"/>
    <lineage>
        <taxon>Archaea</taxon>
        <taxon>Methanobacteriati</taxon>
        <taxon>Methanobacteriota</taxon>
        <taxon>Methanomada group</taxon>
        <taxon>Methanococci</taxon>
        <taxon>Methanococcales</taxon>
        <taxon>Methanococcaceae</taxon>
        <taxon>Methanococcus</taxon>
    </lineage>
</organism>
<dbReference type="EC" id="1.2.1.22"/>
<dbReference type="EMBL" id="CP000609">
    <property type="protein sequence ID" value="ABO34407.1"/>
    <property type="molecule type" value="Genomic_DNA"/>
</dbReference>
<dbReference type="RefSeq" id="WP_011867868.1">
    <property type="nucleotide sequence ID" value="NC_009135.1"/>
</dbReference>
<dbReference type="SMR" id="A4FW36"/>
<dbReference type="STRING" id="402880.MmarC5_0090"/>
<dbReference type="GeneID" id="4928313"/>
<dbReference type="KEGG" id="mmq:MmarC5_0090"/>
<dbReference type="eggNOG" id="arCOG01252">
    <property type="taxonomic scope" value="Archaea"/>
</dbReference>
<dbReference type="HOGENOM" id="CLU_005391_1_0_2"/>
<dbReference type="OrthoDB" id="6342at2157"/>
<dbReference type="UniPathway" id="UPA00071"/>
<dbReference type="Proteomes" id="UP000000253">
    <property type="component" value="Chromosome"/>
</dbReference>
<dbReference type="GO" id="GO:0008911">
    <property type="term" value="F:lactaldehyde dehydrogenase (NAD+) activity"/>
    <property type="evidence" value="ECO:0007669"/>
    <property type="project" value="UniProtKB-EC"/>
</dbReference>
<dbReference type="CDD" id="cd07145">
    <property type="entry name" value="ALDH_LactADH_F420-Bios"/>
    <property type="match status" value="1"/>
</dbReference>
<dbReference type="FunFam" id="3.40.605.10:FF:000007">
    <property type="entry name" value="NAD/NADP-dependent betaine aldehyde dehydrogenase"/>
    <property type="match status" value="1"/>
</dbReference>
<dbReference type="Gene3D" id="3.40.605.10">
    <property type="entry name" value="Aldehyde Dehydrogenase, Chain A, domain 1"/>
    <property type="match status" value="1"/>
</dbReference>
<dbReference type="Gene3D" id="3.40.309.10">
    <property type="entry name" value="Aldehyde Dehydrogenase, Chain A, domain 2"/>
    <property type="match status" value="1"/>
</dbReference>
<dbReference type="InterPro" id="IPR016161">
    <property type="entry name" value="Ald_DH/histidinol_DH"/>
</dbReference>
<dbReference type="InterPro" id="IPR016163">
    <property type="entry name" value="Ald_DH_C"/>
</dbReference>
<dbReference type="InterPro" id="IPR029510">
    <property type="entry name" value="Ald_DH_CS_GLU"/>
</dbReference>
<dbReference type="InterPro" id="IPR016162">
    <property type="entry name" value="Ald_DH_N"/>
</dbReference>
<dbReference type="InterPro" id="IPR015590">
    <property type="entry name" value="Aldehyde_DH_dom"/>
</dbReference>
<dbReference type="InterPro" id="IPR051020">
    <property type="entry name" value="ALDH-related_metabolic_enz"/>
</dbReference>
<dbReference type="InterPro" id="IPR053404">
    <property type="entry name" value="Lactaldehyde_DH"/>
</dbReference>
<dbReference type="NCBIfam" id="NF040648">
    <property type="entry name" value="lactal_redase_Meth"/>
    <property type="match status" value="1"/>
</dbReference>
<dbReference type="PANTHER" id="PTHR42991">
    <property type="entry name" value="ALDEHYDE DEHYDROGENASE"/>
    <property type="match status" value="1"/>
</dbReference>
<dbReference type="PANTHER" id="PTHR42991:SF1">
    <property type="entry name" value="ALDEHYDE DEHYDROGENASE"/>
    <property type="match status" value="1"/>
</dbReference>
<dbReference type="Pfam" id="PF00171">
    <property type="entry name" value="Aldedh"/>
    <property type="match status" value="1"/>
</dbReference>
<dbReference type="SUPFAM" id="SSF53720">
    <property type="entry name" value="ALDH-like"/>
    <property type="match status" value="1"/>
</dbReference>
<dbReference type="PROSITE" id="PS00687">
    <property type="entry name" value="ALDEHYDE_DEHYDR_GLU"/>
    <property type="match status" value="1"/>
</dbReference>
<gene>
    <name type="ordered locus">MmarC5_0090</name>
</gene>
<proteinExistence type="inferred from homology"/>
<accession>A4FW36</accession>
<feature type="chain" id="PRO_0000342590" description="Lactaldehyde dehydrogenase">
    <location>
        <begin position="1"/>
        <end position="465"/>
    </location>
</feature>
<feature type="active site" evidence="2">
    <location>
        <position position="240"/>
    </location>
</feature>
<feature type="active site" evidence="2">
    <location>
        <position position="274"/>
    </location>
</feature>
<feature type="binding site" evidence="1">
    <location>
        <begin position="220"/>
        <end position="225"/>
    </location>
    <ligand>
        <name>NAD(+)</name>
        <dbReference type="ChEBI" id="CHEBI:57540"/>
    </ligand>
</feature>
<protein>
    <recommendedName>
        <fullName>Lactaldehyde dehydrogenase</fullName>
        <ecNumber>1.2.1.22</ecNumber>
    </recommendedName>
</protein>
<keyword id="KW-0520">NAD</keyword>
<keyword id="KW-0560">Oxidoreductase</keyword>
<reference key="1">
    <citation type="submission" date="2007-03" db="EMBL/GenBank/DDBJ databases">
        <title>Complete sequence of chromosome of Methanococcus maripaludis C5.</title>
        <authorList>
            <consortium name="US DOE Joint Genome Institute"/>
            <person name="Copeland A."/>
            <person name="Lucas S."/>
            <person name="Lapidus A."/>
            <person name="Barry K."/>
            <person name="Glavina del Rio T."/>
            <person name="Dalin E."/>
            <person name="Tice H."/>
            <person name="Pitluck S."/>
            <person name="Chertkov O."/>
            <person name="Brettin T."/>
            <person name="Bruce D."/>
            <person name="Han C."/>
            <person name="Detter J.C."/>
            <person name="Schmutz J."/>
            <person name="Larimer F."/>
            <person name="Land M."/>
            <person name="Hauser L."/>
            <person name="Kyrpides N."/>
            <person name="Mikhailova N."/>
            <person name="Sieprawska-Lupa M."/>
            <person name="Whitman W.B."/>
            <person name="Richardson P."/>
        </authorList>
    </citation>
    <scope>NUCLEOTIDE SEQUENCE [LARGE SCALE GENOMIC DNA]</scope>
    <source>
        <strain>C5 / ATCC BAA-1333</strain>
    </source>
</reference>
<sequence>MFIDGKWILREDIDVFDPYTLENIEKITALDREETKSAIEVAEKNKEIMKNLSPSKRYSILMKIAEQISLKKDLFAKTISIDVGKPIKQSKIEVDRTLTALKLSAFYAKELRGETINSENGLIFTKKEPLGVVGAITPFNFPLNLITHKIGPAIATGNSVVLHPSSKAPIVAIYLTKIIEHVLKQMDVPRGIFNLATGNGDIVGDEISKNDNINMVSFTGSVEVGESISKNAKMKKVALELGGNNPMIVLKDSDIKLAAKSAVKSKFLNAGQVCISVGQVLVEEEVLETFTKHVIEETKKLILGNPLDTKTDIGPLISPESALRIENLIKKSVNEGGEVLIGGNRQNSLISPAVINIDENNILSKIETFGPVLPILKVKDSEEAVSIANNSKYGLQAGVFTNDINKAMKIADSLEYGGIMINSSPTFRKDNMPFGGVKKSGLGREGIKYTVEEMCETKTIVIHNI</sequence>
<comment type="function">
    <text evidence="1">Involved in F420 biosynthesis through the oxidation of lactaldehyde to lactate.</text>
</comment>
<comment type="catalytic activity">
    <reaction>
        <text>(S)-lactaldehyde + NAD(+) + H2O = (S)-lactate + NADH + 2 H(+)</text>
        <dbReference type="Rhea" id="RHEA:14277"/>
        <dbReference type="ChEBI" id="CHEBI:15377"/>
        <dbReference type="ChEBI" id="CHEBI:15378"/>
        <dbReference type="ChEBI" id="CHEBI:16651"/>
        <dbReference type="ChEBI" id="CHEBI:18041"/>
        <dbReference type="ChEBI" id="CHEBI:57540"/>
        <dbReference type="ChEBI" id="CHEBI:57945"/>
        <dbReference type="EC" id="1.2.1.22"/>
    </reaction>
</comment>
<comment type="pathway">
    <text>Cofactor biosynthesis; coenzyme F420 biosynthesis.</text>
</comment>
<comment type="subunit">
    <text evidence="1">Homotetramer.</text>
</comment>
<comment type="similarity">
    <text evidence="3">Belongs to the aldehyde dehydrogenase family.</text>
</comment>
<name>LADH_METM5</name>